<gene>
    <name type="primary">KCNE1</name>
</gene>
<evidence type="ECO:0000250" key="1"/>
<evidence type="ECO:0000250" key="2">
    <source>
        <dbReference type="UniProtKB" id="P15382"/>
    </source>
</evidence>
<evidence type="ECO:0000250" key="3">
    <source>
        <dbReference type="UniProtKB" id="P15383"/>
    </source>
</evidence>
<evidence type="ECO:0000250" key="4">
    <source>
        <dbReference type="UniProtKB" id="P23299"/>
    </source>
</evidence>
<evidence type="ECO:0000255" key="5"/>
<evidence type="ECO:0000305" key="6"/>
<name>KCNE1_PONAB</name>
<sequence>MILSNTTAVTPFLTKLWQETVQQGGNVSGLARRSPRSDDGKLEALYVLMVLGFFGFFTLGIMLSYIRSKKLEHSNDPFNVYIESDAWQEKDKAYVQARVLKSYRACYVVENHLAVEQPNTHLPGTKPSP</sequence>
<keyword id="KW-1003">Cell membrane</keyword>
<keyword id="KW-0325">Glycoprotein</keyword>
<keyword id="KW-0407">Ion channel</keyword>
<keyword id="KW-0406">Ion transport</keyword>
<keyword id="KW-0472">Membrane</keyword>
<keyword id="KW-0597">Phosphoprotein</keyword>
<keyword id="KW-0630">Potassium</keyword>
<keyword id="KW-0631">Potassium channel</keyword>
<keyword id="KW-0633">Potassium transport</keyword>
<keyword id="KW-1185">Reference proteome</keyword>
<keyword id="KW-0812">Transmembrane</keyword>
<keyword id="KW-1133">Transmembrane helix</keyword>
<keyword id="KW-0813">Transport</keyword>
<keyword id="KW-0851">Voltage-gated channel</keyword>
<comment type="function">
    <text evidence="2">Ancillary protein that functions as a regulatory subunit of the voltage-gated potassium (Kv) channel complex composed of pore-forming and potassium-conducting alpha subunits and of regulatory beta subunits. KCNE1 beta subunit modulates the gating kinetics and enhances stability of the channel complex. Alters the gating of the delayed rectifier Kv channel containing KCNB1 alpha subunit. Associates with KCNQ1/KVLQT1 alpha subunit to form the slowly activating delayed rectifier cardiac potassium (IKs) channel responsible for ventricular muscle action potential repolarization. The outward current reaches its steady state only after 50 seconds. Assembly with KCNH2/HERG alpha subunit Kv channel may regulate the rapidly activating component of the delayed rectifying potassium current (IKr) in heart.</text>
</comment>
<comment type="subunit">
    <text evidence="2 3 4">Interacts with KCNB1. Interacts with KCNC2 (By similarity). Associates with KCNH2/HERG. Interacts with KCNQ1; targets the complex KCNQ1-KCNE1 to the membrane raft (By similarity).</text>
</comment>
<comment type="subcellular location">
    <subcellularLocation>
        <location evidence="2 3">Cell membrane</location>
        <topology evidence="2">Single-pass type I membrane protein</topology>
    </subcellularLocation>
    <subcellularLocation>
        <location evidence="3">Apical cell membrane</location>
    </subcellularLocation>
    <subcellularLocation>
        <location evidence="2">Membrane raft</location>
    </subcellularLocation>
    <text evidence="2 3">Colocalizes with KCNB1 at the plasma membrane (By similarity). Targets to the membrane raft when associated with KCNQ1 (By similarity).</text>
</comment>
<comment type="PTM">
    <text evidence="1">Phosphorylation inhibits the potassium current.</text>
</comment>
<comment type="PTM">
    <text evidence="1">N-glycosylation at Asn-26 occurs post-translationally, and requires prior cotranslational glycosylation at Asn-5.</text>
</comment>
<comment type="similarity">
    <text evidence="6">Belongs to the potassium channel KCNE family.</text>
</comment>
<feature type="chain" id="PRO_0000144281" description="Potassium voltage-gated channel subfamily E member 1">
    <location>
        <begin position="1"/>
        <end position="129"/>
    </location>
</feature>
<feature type="transmembrane region" description="Helical" evidence="5">
    <location>
        <begin position="44"/>
        <end position="66"/>
    </location>
</feature>
<feature type="topological domain" description="Cytoplasmic" evidence="5">
    <location>
        <begin position="67"/>
        <end position="129"/>
    </location>
</feature>
<feature type="modified residue" description="Phosphoserine; by PKC" evidence="1">
    <location>
        <position position="102"/>
    </location>
</feature>
<feature type="glycosylation site" description="N-linked (GlcNAc...) asparagine" evidence="5">
    <location>
        <position position="5"/>
    </location>
</feature>
<feature type="glycosylation site" description="N-linked (GlcNAc...) asparagine" evidence="5">
    <location>
        <position position="26"/>
    </location>
</feature>
<accession>Q5R8Q2</accession>
<dbReference type="EMBL" id="CR859699">
    <property type="protein sequence ID" value="CAH91858.1"/>
    <property type="molecule type" value="mRNA"/>
</dbReference>
<dbReference type="RefSeq" id="NP_001126076.1">
    <property type="nucleotide sequence ID" value="NM_001132604.1"/>
</dbReference>
<dbReference type="SMR" id="Q5R8Q2"/>
<dbReference type="STRING" id="9601.ENSPPYP00000012714"/>
<dbReference type="GlyCosmos" id="Q5R8Q2">
    <property type="glycosylation" value="2 sites, No reported glycans"/>
</dbReference>
<dbReference type="GeneID" id="100173028"/>
<dbReference type="KEGG" id="pon:100173028"/>
<dbReference type="CTD" id="3753"/>
<dbReference type="eggNOG" id="ENOG502SG7D">
    <property type="taxonomic scope" value="Eukaryota"/>
</dbReference>
<dbReference type="InParanoid" id="Q5R8Q2"/>
<dbReference type="OrthoDB" id="8772344at2759"/>
<dbReference type="Proteomes" id="UP000001595">
    <property type="component" value="Unplaced"/>
</dbReference>
<dbReference type="GO" id="GO:0016324">
    <property type="term" value="C:apical plasma membrane"/>
    <property type="evidence" value="ECO:0007669"/>
    <property type="project" value="UniProtKB-SubCell"/>
</dbReference>
<dbReference type="GO" id="GO:0045121">
    <property type="term" value="C:membrane raft"/>
    <property type="evidence" value="ECO:0007669"/>
    <property type="project" value="UniProtKB-SubCell"/>
</dbReference>
<dbReference type="GO" id="GO:0005886">
    <property type="term" value="C:plasma membrane"/>
    <property type="evidence" value="ECO:0000250"/>
    <property type="project" value="UniProtKB"/>
</dbReference>
<dbReference type="GO" id="GO:0008076">
    <property type="term" value="C:voltage-gated potassium channel complex"/>
    <property type="evidence" value="ECO:0007669"/>
    <property type="project" value="TreeGrafter"/>
</dbReference>
<dbReference type="GO" id="GO:0005251">
    <property type="term" value="F:delayed rectifier potassium channel activity"/>
    <property type="evidence" value="ECO:0000250"/>
    <property type="project" value="UniProtKB"/>
</dbReference>
<dbReference type="GO" id="GO:0015459">
    <property type="term" value="F:potassium channel regulator activity"/>
    <property type="evidence" value="ECO:0000250"/>
    <property type="project" value="UniProtKB"/>
</dbReference>
<dbReference type="GO" id="GO:0044325">
    <property type="term" value="F:transmembrane transporter binding"/>
    <property type="evidence" value="ECO:0007669"/>
    <property type="project" value="TreeGrafter"/>
</dbReference>
<dbReference type="GO" id="GO:0086011">
    <property type="term" value="P:membrane repolarization during action potential"/>
    <property type="evidence" value="ECO:0007669"/>
    <property type="project" value="TreeGrafter"/>
</dbReference>
<dbReference type="GO" id="GO:1902260">
    <property type="term" value="P:negative regulation of delayed rectifier potassium channel activity"/>
    <property type="evidence" value="ECO:0000250"/>
    <property type="project" value="UniProtKB"/>
</dbReference>
<dbReference type="GO" id="GO:0097623">
    <property type="term" value="P:potassium ion export across plasma membrane"/>
    <property type="evidence" value="ECO:0007669"/>
    <property type="project" value="TreeGrafter"/>
</dbReference>
<dbReference type="GO" id="GO:0086091">
    <property type="term" value="P:regulation of heart rate by cardiac conduction"/>
    <property type="evidence" value="ECO:0007669"/>
    <property type="project" value="TreeGrafter"/>
</dbReference>
<dbReference type="GO" id="GO:0060307">
    <property type="term" value="P:regulation of ventricular cardiac muscle cell membrane repolarization"/>
    <property type="evidence" value="ECO:0007669"/>
    <property type="project" value="TreeGrafter"/>
</dbReference>
<dbReference type="GO" id="GO:0086005">
    <property type="term" value="P:ventricular cardiac muscle cell action potential"/>
    <property type="evidence" value="ECO:0007669"/>
    <property type="project" value="TreeGrafter"/>
</dbReference>
<dbReference type="InterPro" id="IPR000369">
    <property type="entry name" value="K_chnl_KCNE"/>
</dbReference>
<dbReference type="InterPro" id="IPR005424">
    <property type="entry name" value="KCNE1"/>
</dbReference>
<dbReference type="PANTHER" id="PTHR15282:SF10">
    <property type="entry name" value="POTASSIUM VOLTAGE-GATED CHANNEL SUBFAMILY E MEMBER 1"/>
    <property type="match status" value="1"/>
</dbReference>
<dbReference type="PANTHER" id="PTHR15282">
    <property type="entry name" value="POTASSIUM VOLTAGE-GATED CHANNEL SUBFAMILY E MEMBER 1, 3"/>
    <property type="match status" value="1"/>
</dbReference>
<dbReference type="Pfam" id="PF02060">
    <property type="entry name" value="ISK_Channel"/>
    <property type="match status" value="1"/>
</dbReference>
<dbReference type="PRINTS" id="PR01604">
    <property type="entry name" value="KCNE1CHANNEL"/>
</dbReference>
<dbReference type="PRINTS" id="PR00168">
    <property type="entry name" value="KCNECHANNEL"/>
</dbReference>
<organism>
    <name type="scientific">Pongo abelii</name>
    <name type="common">Sumatran orangutan</name>
    <name type="synonym">Pongo pygmaeus abelii</name>
    <dbReference type="NCBI Taxonomy" id="9601"/>
    <lineage>
        <taxon>Eukaryota</taxon>
        <taxon>Metazoa</taxon>
        <taxon>Chordata</taxon>
        <taxon>Craniata</taxon>
        <taxon>Vertebrata</taxon>
        <taxon>Euteleostomi</taxon>
        <taxon>Mammalia</taxon>
        <taxon>Eutheria</taxon>
        <taxon>Euarchontoglires</taxon>
        <taxon>Primates</taxon>
        <taxon>Haplorrhini</taxon>
        <taxon>Catarrhini</taxon>
        <taxon>Hominidae</taxon>
        <taxon>Pongo</taxon>
    </lineage>
</organism>
<protein>
    <recommendedName>
        <fullName>Potassium voltage-gated channel subfamily E member 1</fullName>
    </recommendedName>
</protein>
<proteinExistence type="evidence at transcript level"/>
<reference key="1">
    <citation type="submission" date="2004-11" db="EMBL/GenBank/DDBJ databases">
        <authorList>
            <consortium name="The German cDNA consortium"/>
        </authorList>
    </citation>
    <scope>NUCLEOTIDE SEQUENCE [LARGE SCALE MRNA]</scope>
    <source>
        <tissue>Heart</tissue>
    </source>
</reference>